<organism>
    <name type="scientific">Rattus norvegicus</name>
    <name type="common">Rat</name>
    <dbReference type="NCBI Taxonomy" id="10116"/>
    <lineage>
        <taxon>Eukaryota</taxon>
        <taxon>Metazoa</taxon>
        <taxon>Chordata</taxon>
        <taxon>Craniata</taxon>
        <taxon>Vertebrata</taxon>
        <taxon>Euteleostomi</taxon>
        <taxon>Mammalia</taxon>
        <taxon>Eutheria</taxon>
        <taxon>Euarchontoglires</taxon>
        <taxon>Glires</taxon>
        <taxon>Rodentia</taxon>
        <taxon>Myomorpha</taxon>
        <taxon>Muroidea</taxon>
        <taxon>Muridae</taxon>
        <taxon>Murinae</taxon>
        <taxon>Rattus</taxon>
    </lineage>
</organism>
<keyword id="KW-0966">Cell projection</keyword>
<keyword id="KW-0969">Cilium</keyword>
<keyword id="KW-0970">Cilium biogenesis/degradation</keyword>
<keyword id="KW-1185">Reference proteome</keyword>
<evidence type="ECO:0000250" key="1">
    <source>
        <dbReference type="UniProtKB" id="Q96BN6"/>
    </source>
</evidence>
<evidence type="ECO:0000256" key="2">
    <source>
        <dbReference type="SAM" id="MobiDB-lite"/>
    </source>
</evidence>
<evidence type="ECO:0000305" key="3"/>
<evidence type="ECO:0000312" key="4">
    <source>
        <dbReference type="RGD" id="1359592"/>
    </source>
</evidence>
<accession>Q5PQL8</accession>
<reference key="1">
    <citation type="journal article" date="2004" name="Genome Res.">
        <title>The status, quality, and expansion of the NIH full-length cDNA project: the Mammalian Gene Collection (MGC).</title>
        <authorList>
            <consortium name="The MGC Project Team"/>
        </authorList>
    </citation>
    <scope>NUCLEOTIDE SEQUENCE [LARGE SCALE MRNA]</scope>
    <source>
        <tissue>Testis</tissue>
    </source>
</reference>
<comment type="function">
    <text evidence="1">Involved in the localization of proteins to the cilium and cilium assembly. Indirectly regulates the signaling functions of the cilium, being required for normal SHH/smoothened signaling and proper development.</text>
</comment>
<comment type="subunit">
    <text evidence="1">Interacts with TBC1D32; may play a role in cilium assembly.</text>
</comment>
<comment type="subcellular location">
    <subcellularLocation>
        <location evidence="1">Cell projection</location>
        <location evidence="1">Cilium</location>
    </subcellularLocation>
</comment>
<comment type="similarity">
    <text evidence="3">Belongs to the FAM149 family.</text>
</comment>
<proteinExistence type="evidence at transcript level"/>
<name>F149B_RAT</name>
<protein>
    <recommendedName>
        <fullName evidence="3">Primary cilium assembly protein FAM149B1</fullName>
    </recommendedName>
</protein>
<gene>
    <name evidence="4" type="primary">Fam149b1</name>
</gene>
<dbReference type="EMBL" id="BC087126">
    <property type="protein sequence ID" value="AAH87126.1"/>
    <property type="molecule type" value="mRNA"/>
</dbReference>
<dbReference type="RefSeq" id="NP_001013900.1">
    <property type="nucleotide sequence ID" value="NM_001013878.2"/>
</dbReference>
<dbReference type="RefSeq" id="XP_063130136.1">
    <property type="nucleotide sequence ID" value="XM_063274066.1"/>
</dbReference>
<dbReference type="FunCoup" id="Q5PQL8">
    <property type="interactions" value="3786"/>
</dbReference>
<dbReference type="STRING" id="10116.ENSRNOP00000068596"/>
<dbReference type="PhosphoSitePlus" id="Q5PQL8"/>
<dbReference type="PaxDb" id="10116-ENSRNOP00000063752"/>
<dbReference type="Ensembl" id="ENSRNOT00000065858.3">
    <property type="protein sequence ID" value="ENSRNOP00000063752.1"/>
    <property type="gene ID" value="ENSRNOG00000006554.8"/>
</dbReference>
<dbReference type="GeneID" id="289900"/>
<dbReference type="KEGG" id="rno:289900"/>
<dbReference type="UCSC" id="RGD:1359592">
    <property type="organism name" value="rat"/>
</dbReference>
<dbReference type="AGR" id="RGD:1359592"/>
<dbReference type="CTD" id="317662"/>
<dbReference type="RGD" id="1359592">
    <property type="gene designation" value="Fam149b1"/>
</dbReference>
<dbReference type="eggNOG" id="ENOG502QVD4">
    <property type="taxonomic scope" value="Eukaryota"/>
</dbReference>
<dbReference type="GeneTree" id="ENSGT00530000063727"/>
<dbReference type="HOGENOM" id="CLU_018180_1_1_1"/>
<dbReference type="InParanoid" id="Q5PQL8"/>
<dbReference type="PRO" id="PR:Q5PQL8"/>
<dbReference type="Proteomes" id="UP000002494">
    <property type="component" value="Chromosome 15"/>
</dbReference>
<dbReference type="Bgee" id="ENSRNOG00000006554">
    <property type="expression patterns" value="Expressed in kidney and 20 other cell types or tissues"/>
</dbReference>
<dbReference type="ExpressionAtlas" id="Q5PQL8">
    <property type="expression patterns" value="baseline and differential"/>
</dbReference>
<dbReference type="GO" id="GO:0005929">
    <property type="term" value="C:cilium"/>
    <property type="evidence" value="ECO:0007669"/>
    <property type="project" value="UniProtKB-SubCell"/>
</dbReference>
<dbReference type="GO" id="GO:0060271">
    <property type="term" value="P:cilium assembly"/>
    <property type="evidence" value="ECO:0000266"/>
    <property type="project" value="RGD"/>
</dbReference>
<dbReference type="GO" id="GO:0061512">
    <property type="term" value="P:protein localization to cilium"/>
    <property type="evidence" value="ECO:0000266"/>
    <property type="project" value="RGD"/>
</dbReference>
<dbReference type="InterPro" id="IPR022194">
    <property type="entry name" value="DUF3719"/>
</dbReference>
<dbReference type="InterPro" id="IPR039630">
    <property type="entry name" value="FAM149"/>
</dbReference>
<dbReference type="PANTHER" id="PTHR31997">
    <property type="entry name" value="AGAP003710-PA"/>
    <property type="match status" value="1"/>
</dbReference>
<dbReference type="PANTHER" id="PTHR31997:SF0">
    <property type="entry name" value="PRIMARY CILIUM ASSEMBLY PROTEIN FAM149B1"/>
    <property type="match status" value="1"/>
</dbReference>
<dbReference type="Pfam" id="PF12516">
    <property type="entry name" value="DUF3719"/>
    <property type="match status" value="1"/>
</dbReference>
<sequence>MELDQNATEKVKAMFTAIDELLYEQKPSVHTQSLQKECQQWASSFPHLRILGRQIITSSEGYGLYPRSPSAVSASHEAILPQERESTIFGIRGKKLHFSSSYKASPSTKASGSSADGEEADCIIFSEGIIEEYLAFDHTDMEEGFHGNKSEAATEKQKLGYPPIAPFYCMKEDVLAYVFDNVWSKAVGCMEQLTRSHWEGFASDDESNVEITRLDSGSPYMLNEQQPLVLPRVPQSKVMSVTSNPMNFCQASGHQPNVNGLLIHGMPLQPRNLSLMDKLLDLDDKLLMRPGSSSVLSNRNWPNRAMELSTSSLSYTTQSARRRNPPPRTLHPISTSHSRTGTPWPAEEILRGPRLPMTADSLSSPSPMTMGRNNLLPPIGTADVEHLSILGSQRPTKPHGDSSRARSAAVDEPNQQPQERLLLPVFSRPNTTQSFLPETQYRSSCASECPHHARPGRGSAGPQSHGSTKPQSRGGPISRTRQ</sequence>
<feature type="chain" id="PRO_0000319935" description="Primary cilium assembly protein FAM149B1">
    <location>
        <begin position="1"/>
        <end position="482"/>
    </location>
</feature>
<feature type="region of interest" description="Disordered" evidence="2">
    <location>
        <begin position="314"/>
        <end position="344"/>
    </location>
</feature>
<feature type="region of interest" description="Disordered" evidence="2">
    <location>
        <begin position="356"/>
        <end position="379"/>
    </location>
</feature>
<feature type="region of interest" description="Disordered" evidence="2">
    <location>
        <begin position="391"/>
        <end position="482"/>
    </location>
</feature>
<feature type="compositionally biased region" description="Polar residues" evidence="2">
    <location>
        <begin position="332"/>
        <end position="341"/>
    </location>
</feature>
<feature type="compositionally biased region" description="Polar residues" evidence="2">
    <location>
        <begin position="428"/>
        <end position="446"/>
    </location>
</feature>
<feature type="compositionally biased region" description="Polar residues" evidence="2">
    <location>
        <begin position="461"/>
        <end position="471"/>
    </location>
</feature>